<feature type="chain" id="PRO_1000006394" description="Glycine--tRNA ligase beta subunit">
    <location>
        <begin position="1"/>
        <end position="684"/>
    </location>
</feature>
<accession>Q500T7</accession>
<proteinExistence type="inferred from homology"/>
<protein>
    <recommendedName>
        <fullName evidence="1">Glycine--tRNA ligase beta subunit</fullName>
        <ecNumber evidence="1">6.1.1.14</ecNumber>
    </recommendedName>
    <alternativeName>
        <fullName evidence="1">Glycyl-tRNA synthetase beta subunit</fullName>
        <shortName evidence="1">GlyRS</shortName>
    </alternativeName>
</protein>
<dbReference type="EC" id="6.1.1.14" evidence="1"/>
<dbReference type="EMBL" id="CP000075">
    <property type="protein sequence ID" value="AAY35085.1"/>
    <property type="molecule type" value="Genomic_DNA"/>
</dbReference>
<dbReference type="RefSeq" id="WP_003401442.1">
    <property type="nucleotide sequence ID" value="NC_007005.1"/>
</dbReference>
<dbReference type="RefSeq" id="YP_233123.1">
    <property type="nucleotide sequence ID" value="NC_007005.1"/>
</dbReference>
<dbReference type="SMR" id="Q500T7"/>
<dbReference type="STRING" id="205918.Psyr_0011"/>
<dbReference type="KEGG" id="psb:Psyr_0011"/>
<dbReference type="PATRIC" id="fig|205918.7.peg.11"/>
<dbReference type="eggNOG" id="COG0751">
    <property type="taxonomic scope" value="Bacteria"/>
</dbReference>
<dbReference type="HOGENOM" id="CLU_007220_2_2_6"/>
<dbReference type="OrthoDB" id="9775440at2"/>
<dbReference type="Proteomes" id="UP000000426">
    <property type="component" value="Chromosome"/>
</dbReference>
<dbReference type="GO" id="GO:0005829">
    <property type="term" value="C:cytosol"/>
    <property type="evidence" value="ECO:0007669"/>
    <property type="project" value="TreeGrafter"/>
</dbReference>
<dbReference type="GO" id="GO:0004814">
    <property type="term" value="F:arginine-tRNA ligase activity"/>
    <property type="evidence" value="ECO:0007669"/>
    <property type="project" value="InterPro"/>
</dbReference>
<dbReference type="GO" id="GO:0005524">
    <property type="term" value="F:ATP binding"/>
    <property type="evidence" value="ECO:0007669"/>
    <property type="project" value="UniProtKB-UniRule"/>
</dbReference>
<dbReference type="GO" id="GO:0004820">
    <property type="term" value="F:glycine-tRNA ligase activity"/>
    <property type="evidence" value="ECO:0007669"/>
    <property type="project" value="UniProtKB-UniRule"/>
</dbReference>
<dbReference type="GO" id="GO:0006420">
    <property type="term" value="P:arginyl-tRNA aminoacylation"/>
    <property type="evidence" value="ECO:0007669"/>
    <property type="project" value="InterPro"/>
</dbReference>
<dbReference type="GO" id="GO:0006426">
    <property type="term" value="P:glycyl-tRNA aminoacylation"/>
    <property type="evidence" value="ECO:0007669"/>
    <property type="project" value="UniProtKB-UniRule"/>
</dbReference>
<dbReference type="HAMAP" id="MF_00255">
    <property type="entry name" value="Gly_tRNA_synth_beta"/>
    <property type="match status" value="1"/>
</dbReference>
<dbReference type="InterPro" id="IPR008909">
    <property type="entry name" value="DALR_anticod-bd"/>
</dbReference>
<dbReference type="InterPro" id="IPR015944">
    <property type="entry name" value="Gly-tRNA-synth_bsu"/>
</dbReference>
<dbReference type="InterPro" id="IPR006194">
    <property type="entry name" value="Gly-tRNA-synth_heterodimer"/>
</dbReference>
<dbReference type="NCBIfam" id="TIGR00211">
    <property type="entry name" value="glyS"/>
    <property type="match status" value="1"/>
</dbReference>
<dbReference type="PANTHER" id="PTHR30075:SF2">
    <property type="entry name" value="GLYCINE--TRNA LIGASE, CHLOROPLASTIC_MITOCHONDRIAL 2"/>
    <property type="match status" value="1"/>
</dbReference>
<dbReference type="PANTHER" id="PTHR30075">
    <property type="entry name" value="GLYCYL-TRNA SYNTHETASE"/>
    <property type="match status" value="1"/>
</dbReference>
<dbReference type="Pfam" id="PF05746">
    <property type="entry name" value="DALR_1"/>
    <property type="match status" value="1"/>
</dbReference>
<dbReference type="Pfam" id="PF02092">
    <property type="entry name" value="tRNA_synt_2f"/>
    <property type="match status" value="1"/>
</dbReference>
<dbReference type="PRINTS" id="PR01045">
    <property type="entry name" value="TRNASYNTHGB"/>
</dbReference>
<dbReference type="SUPFAM" id="SSF109604">
    <property type="entry name" value="HD-domain/PDEase-like"/>
    <property type="match status" value="1"/>
</dbReference>
<dbReference type="PROSITE" id="PS50861">
    <property type="entry name" value="AA_TRNA_LIGASE_II_GLYAB"/>
    <property type="match status" value="1"/>
</dbReference>
<name>SYGB_PSEU2</name>
<sequence>MSAQDFLVELGTEELPPKTLVSLADAFLAGIEKGLAGAGLTYSAKQVYAAPRRLAVLITALATQQPDRSVNLDGPPRQAAFDADGNPTQAALGFAKKCGVDLSEIDQSGPKLRYSQTILGKPTTSLLPTIVEDSLNDLPIAKRMRWGARKEEFVRPTQWLVMLFGDQVVDCTILAQSAGRHSRGHRFHHPQDVRISSPAGYLSDLRAAHVLADFNERRQIISKRVDELATQQEGTAIVPPSLLDEVAGLVEWPVPLVCSFEERFLEVPQEALITTMQDNQKYFCLLDVDGKLLPRFITVANIESKDPAQIIAGNEKVVRPRLTDAEFFFKQDKKQKLETFNDRLKNVVFQAQLGSVFDKAERVSKLAAYIAPRIGGDAQRAARAGLLSKCDLSSEMVGEFPEMQGIAGYYYAKADGEPEDVALALNEQYMPRGAGAELPTTLTGAAVAIADKLDTLVGIFGIGMLPTGSKDPYALRRAALGILRILIEKKLDLNLVETVKFAVAQFGAKIKPAGLAEQVLDFIFDRLRARYEDEGVDVAVYLSVRALQPASALDFDQRVQAVQAFRKLPQAAALAAVNKRVSNLLSKAEGSIAQTVEPKYFDNANEFSLYSAIQQADHAIQPMAAERQYSESLARLAMLREPVDAFFEAVMVNAEDANVRANRYALLSRLRGLFLGVADISLLG</sequence>
<gene>
    <name evidence="1" type="primary">glyS</name>
    <name type="ordered locus">Psyr_0011</name>
</gene>
<keyword id="KW-0030">Aminoacyl-tRNA synthetase</keyword>
<keyword id="KW-0067">ATP-binding</keyword>
<keyword id="KW-0963">Cytoplasm</keyword>
<keyword id="KW-0436">Ligase</keyword>
<keyword id="KW-0547">Nucleotide-binding</keyword>
<keyword id="KW-0648">Protein biosynthesis</keyword>
<comment type="catalytic activity">
    <reaction evidence="1">
        <text>tRNA(Gly) + glycine + ATP = glycyl-tRNA(Gly) + AMP + diphosphate</text>
        <dbReference type="Rhea" id="RHEA:16013"/>
        <dbReference type="Rhea" id="RHEA-COMP:9664"/>
        <dbReference type="Rhea" id="RHEA-COMP:9683"/>
        <dbReference type="ChEBI" id="CHEBI:30616"/>
        <dbReference type="ChEBI" id="CHEBI:33019"/>
        <dbReference type="ChEBI" id="CHEBI:57305"/>
        <dbReference type="ChEBI" id="CHEBI:78442"/>
        <dbReference type="ChEBI" id="CHEBI:78522"/>
        <dbReference type="ChEBI" id="CHEBI:456215"/>
        <dbReference type="EC" id="6.1.1.14"/>
    </reaction>
</comment>
<comment type="subunit">
    <text evidence="1">Tetramer of two alpha and two beta subunits.</text>
</comment>
<comment type="subcellular location">
    <subcellularLocation>
        <location evidence="1">Cytoplasm</location>
    </subcellularLocation>
</comment>
<comment type="similarity">
    <text evidence="1">Belongs to the class-II aminoacyl-tRNA synthetase family.</text>
</comment>
<organism>
    <name type="scientific">Pseudomonas syringae pv. syringae (strain B728a)</name>
    <dbReference type="NCBI Taxonomy" id="205918"/>
    <lineage>
        <taxon>Bacteria</taxon>
        <taxon>Pseudomonadati</taxon>
        <taxon>Pseudomonadota</taxon>
        <taxon>Gammaproteobacteria</taxon>
        <taxon>Pseudomonadales</taxon>
        <taxon>Pseudomonadaceae</taxon>
        <taxon>Pseudomonas</taxon>
        <taxon>Pseudomonas syringae</taxon>
    </lineage>
</organism>
<reference key="1">
    <citation type="journal article" date="2005" name="Proc. Natl. Acad. Sci. U.S.A.">
        <title>Comparison of the complete genome sequences of Pseudomonas syringae pv. syringae B728a and pv. tomato DC3000.</title>
        <authorList>
            <person name="Feil H."/>
            <person name="Feil W.S."/>
            <person name="Chain P."/>
            <person name="Larimer F."/>
            <person name="Dibartolo G."/>
            <person name="Copeland A."/>
            <person name="Lykidis A."/>
            <person name="Trong S."/>
            <person name="Nolan M."/>
            <person name="Goltsman E."/>
            <person name="Thiel J."/>
            <person name="Malfatti S."/>
            <person name="Loper J.E."/>
            <person name="Lapidus A."/>
            <person name="Detter J.C."/>
            <person name="Land M."/>
            <person name="Richardson P.M."/>
            <person name="Kyrpides N.C."/>
            <person name="Ivanova N."/>
            <person name="Lindow S.E."/>
        </authorList>
    </citation>
    <scope>NUCLEOTIDE SEQUENCE [LARGE SCALE GENOMIC DNA]</scope>
    <source>
        <strain>B728a</strain>
    </source>
</reference>
<evidence type="ECO:0000255" key="1">
    <source>
        <dbReference type="HAMAP-Rule" id="MF_00255"/>
    </source>
</evidence>